<accession>Q06GP1</accession>
<protein>
    <recommendedName>
        <fullName evidence="1">Cytochrome b6-f complex subunit 5</fullName>
    </recommendedName>
    <alternativeName>
        <fullName evidence="1">Cytochrome b6-f complex subunit PetG</fullName>
    </alternativeName>
    <alternativeName>
        <fullName evidence="1">Cytochrome b6-f complex subunit V</fullName>
    </alternativeName>
</protein>
<sequence>MIEVFLFGIVLGLIPITLAGLFVTAYLQYRRGDQLDL</sequence>
<name>PETG_PIPCE</name>
<organism>
    <name type="scientific">Piper cenocladum</name>
    <name type="common">Ant piper</name>
    <dbReference type="NCBI Taxonomy" id="398741"/>
    <lineage>
        <taxon>Eukaryota</taxon>
        <taxon>Viridiplantae</taxon>
        <taxon>Streptophyta</taxon>
        <taxon>Embryophyta</taxon>
        <taxon>Tracheophyta</taxon>
        <taxon>Spermatophyta</taxon>
        <taxon>Magnoliopsida</taxon>
        <taxon>Magnoliidae</taxon>
        <taxon>Piperales</taxon>
        <taxon>Piperaceae</taxon>
        <taxon>Piper</taxon>
    </lineage>
</organism>
<feature type="chain" id="PRO_0000275503" description="Cytochrome b6-f complex subunit 5">
    <location>
        <begin position="1"/>
        <end position="37"/>
    </location>
</feature>
<feature type="transmembrane region" description="Helical" evidence="1">
    <location>
        <begin position="5"/>
        <end position="25"/>
    </location>
</feature>
<gene>
    <name evidence="1" type="primary">petG</name>
</gene>
<dbReference type="EMBL" id="DQ887677">
    <property type="protein sequence ID" value="ABI14491.1"/>
    <property type="molecule type" value="Genomic_DNA"/>
</dbReference>
<dbReference type="RefSeq" id="YP_784492.1">
    <property type="nucleotide sequence ID" value="NC_008457.1"/>
</dbReference>
<dbReference type="SMR" id="Q06GP1"/>
<dbReference type="GeneID" id="4363675"/>
<dbReference type="GO" id="GO:0009535">
    <property type="term" value="C:chloroplast thylakoid membrane"/>
    <property type="evidence" value="ECO:0007669"/>
    <property type="project" value="UniProtKB-SubCell"/>
</dbReference>
<dbReference type="GO" id="GO:0009512">
    <property type="term" value="C:cytochrome b6f complex"/>
    <property type="evidence" value="ECO:0007669"/>
    <property type="project" value="InterPro"/>
</dbReference>
<dbReference type="GO" id="GO:0045158">
    <property type="term" value="F:electron transporter, transferring electrons within cytochrome b6/f complex of photosystem II activity"/>
    <property type="evidence" value="ECO:0007669"/>
    <property type="project" value="UniProtKB-UniRule"/>
</dbReference>
<dbReference type="GO" id="GO:0017004">
    <property type="term" value="P:cytochrome complex assembly"/>
    <property type="evidence" value="ECO:0007669"/>
    <property type="project" value="UniProtKB-UniRule"/>
</dbReference>
<dbReference type="GO" id="GO:0015979">
    <property type="term" value="P:photosynthesis"/>
    <property type="evidence" value="ECO:0007669"/>
    <property type="project" value="UniProtKB-KW"/>
</dbReference>
<dbReference type="HAMAP" id="MF_00432">
    <property type="entry name" value="Cytb6_f_PetG"/>
    <property type="match status" value="1"/>
</dbReference>
<dbReference type="InterPro" id="IPR003683">
    <property type="entry name" value="Cyt_6/f_cplx_su5"/>
</dbReference>
<dbReference type="InterPro" id="IPR036099">
    <property type="entry name" value="Cyt_6/f_cplx_su5_sf"/>
</dbReference>
<dbReference type="NCBIfam" id="NF001907">
    <property type="entry name" value="PRK00665.1"/>
    <property type="match status" value="1"/>
</dbReference>
<dbReference type="Pfam" id="PF02529">
    <property type="entry name" value="PetG"/>
    <property type="match status" value="1"/>
</dbReference>
<dbReference type="PIRSF" id="PIRSF000034">
    <property type="entry name" value="Cyt_b6-f_V"/>
    <property type="match status" value="1"/>
</dbReference>
<dbReference type="SUPFAM" id="SSF103446">
    <property type="entry name" value="PetG subunit of the cytochrome b6f complex"/>
    <property type="match status" value="1"/>
</dbReference>
<reference key="1">
    <citation type="journal article" date="2006" name="BMC Evol. Biol.">
        <title>Complete plastid genome sequences of Drimys, Liriodendron, and Piper: implications for the phylogenetic relationships of magnoliids.</title>
        <authorList>
            <person name="Cai Z."/>
            <person name="Penaflor C."/>
            <person name="Kuehl J.V."/>
            <person name="Leebens-Mack J."/>
            <person name="Carlson J.E."/>
            <person name="dePamphilis C.W."/>
            <person name="Boore J.L."/>
            <person name="Jansen R.K."/>
        </authorList>
    </citation>
    <scope>NUCLEOTIDE SEQUENCE [LARGE SCALE GENOMIC DNA]</scope>
</reference>
<evidence type="ECO:0000255" key="1">
    <source>
        <dbReference type="HAMAP-Rule" id="MF_00432"/>
    </source>
</evidence>
<geneLocation type="chloroplast"/>
<comment type="function">
    <text evidence="1">Component of the cytochrome b6-f complex, which mediates electron transfer between photosystem II (PSII) and photosystem I (PSI), cyclic electron flow around PSI, and state transitions. PetG is required for either the stability or assembly of the cytochrome b6-f complex.</text>
</comment>
<comment type="subunit">
    <text evidence="1">The 4 large subunits of the cytochrome b6-f complex are cytochrome b6, subunit IV (17 kDa polypeptide, PetD), cytochrome f and the Rieske protein, while the 4 small subunits are PetG, PetL, PetM and PetN. The complex functions as a dimer.</text>
</comment>
<comment type="subcellular location">
    <subcellularLocation>
        <location evidence="1">Plastid</location>
        <location evidence="1">Chloroplast thylakoid membrane</location>
        <topology evidence="1">Single-pass membrane protein</topology>
    </subcellularLocation>
</comment>
<comment type="similarity">
    <text evidence="1">Belongs to the PetG family.</text>
</comment>
<keyword id="KW-0150">Chloroplast</keyword>
<keyword id="KW-0249">Electron transport</keyword>
<keyword id="KW-0472">Membrane</keyword>
<keyword id="KW-0602">Photosynthesis</keyword>
<keyword id="KW-0934">Plastid</keyword>
<keyword id="KW-0793">Thylakoid</keyword>
<keyword id="KW-0812">Transmembrane</keyword>
<keyword id="KW-1133">Transmembrane helix</keyword>
<keyword id="KW-0813">Transport</keyword>
<proteinExistence type="inferred from homology"/>